<feature type="chain" id="PRO_0000212582" description="Family of serine hydrolases 3">
    <location>
        <begin position="1"/>
        <end position="266"/>
    </location>
</feature>
<feature type="active site" description="Charge relay system" evidence="1">
    <location>
        <position position="117"/>
    </location>
</feature>
<feature type="active site" description="Charge relay system" evidence="1">
    <location>
        <position position="180"/>
    </location>
</feature>
<feature type="active site" description="Charge relay system" evidence="1">
    <location>
        <position position="209"/>
    </location>
</feature>
<dbReference type="EC" id="3.1.-.-"/>
<dbReference type="EMBL" id="X89633">
    <property type="protein sequence ID" value="CAA61785.1"/>
    <property type="molecule type" value="Genomic_DNA"/>
</dbReference>
<dbReference type="EMBL" id="Z75188">
    <property type="protein sequence ID" value="CAA99506.1"/>
    <property type="molecule type" value="Genomic_DNA"/>
</dbReference>
<dbReference type="EMBL" id="BK006948">
    <property type="protein sequence ID" value="DAA11045.1"/>
    <property type="molecule type" value="Genomic_DNA"/>
</dbReference>
<dbReference type="PIR" id="S67182">
    <property type="entry name" value="S67182"/>
</dbReference>
<dbReference type="RefSeq" id="NP_014923.1">
    <property type="nucleotide sequence ID" value="NM_001183699.1"/>
</dbReference>
<dbReference type="SMR" id="Q99369"/>
<dbReference type="BioGRID" id="34668">
    <property type="interactions" value="44"/>
</dbReference>
<dbReference type="FunCoup" id="Q99369">
    <property type="interactions" value="344"/>
</dbReference>
<dbReference type="IntAct" id="Q99369">
    <property type="interactions" value="2"/>
</dbReference>
<dbReference type="STRING" id="4932.YOR280C"/>
<dbReference type="ESTHER" id="yeast-FSH3">
    <property type="family name" value="FSH1"/>
</dbReference>
<dbReference type="iPTMnet" id="Q99369"/>
<dbReference type="PaxDb" id="4932-YOR280C"/>
<dbReference type="PeptideAtlas" id="Q99369"/>
<dbReference type="EnsemblFungi" id="YOR280C_mRNA">
    <property type="protein sequence ID" value="YOR280C"/>
    <property type="gene ID" value="YOR280C"/>
</dbReference>
<dbReference type="GeneID" id="854454"/>
<dbReference type="KEGG" id="sce:YOR280C"/>
<dbReference type="AGR" id="SGD:S000005806"/>
<dbReference type="SGD" id="S000005806">
    <property type="gene designation" value="FSH3"/>
</dbReference>
<dbReference type="VEuPathDB" id="FungiDB:YOR280C"/>
<dbReference type="eggNOG" id="KOG2551">
    <property type="taxonomic scope" value="Eukaryota"/>
</dbReference>
<dbReference type="GeneTree" id="ENSGT00390000003541"/>
<dbReference type="HOGENOM" id="CLU_051938_2_2_1"/>
<dbReference type="InParanoid" id="Q99369"/>
<dbReference type="OMA" id="EEPRGWW"/>
<dbReference type="OrthoDB" id="2094269at2759"/>
<dbReference type="BioCyc" id="YEAST:G3O-33767-MONOMER"/>
<dbReference type="BioGRID-ORCS" id="854454">
    <property type="hits" value="10 hits in 10 CRISPR screens"/>
</dbReference>
<dbReference type="CD-CODE" id="E03F929F">
    <property type="entry name" value="Stress granule"/>
</dbReference>
<dbReference type="PRO" id="PR:Q99369"/>
<dbReference type="Proteomes" id="UP000002311">
    <property type="component" value="Chromosome XV"/>
</dbReference>
<dbReference type="RNAct" id="Q99369">
    <property type="molecule type" value="protein"/>
</dbReference>
<dbReference type="GO" id="GO:0005737">
    <property type="term" value="C:cytoplasm"/>
    <property type="evidence" value="ECO:0000318"/>
    <property type="project" value="GO_Central"/>
</dbReference>
<dbReference type="GO" id="GO:0005634">
    <property type="term" value="C:nucleus"/>
    <property type="evidence" value="ECO:0000318"/>
    <property type="project" value="GO_Central"/>
</dbReference>
<dbReference type="GO" id="GO:0005777">
    <property type="term" value="C:peroxisome"/>
    <property type="evidence" value="ECO:0000314"/>
    <property type="project" value="SGD"/>
</dbReference>
<dbReference type="GO" id="GO:0052689">
    <property type="term" value="F:carboxylic ester hydrolase activity"/>
    <property type="evidence" value="ECO:0007669"/>
    <property type="project" value="UniProtKB-KW"/>
</dbReference>
<dbReference type="GO" id="GO:0016787">
    <property type="term" value="F:hydrolase activity"/>
    <property type="evidence" value="ECO:0000318"/>
    <property type="project" value="GO_Central"/>
</dbReference>
<dbReference type="FunFam" id="3.40.50.1820:FF:000073">
    <property type="entry name" value="esterase OVCA2 isoform X6"/>
    <property type="match status" value="1"/>
</dbReference>
<dbReference type="Gene3D" id="3.40.50.1820">
    <property type="entry name" value="alpha/beta hydrolase"/>
    <property type="match status" value="1"/>
</dbReference>
<dbReference type="InterPro" id="IPR029058">
    <property type="entry name" value="AB_hydrolase_fold"/>
</dbReference>
<dbReference type="InterPro" id="IPR005645">
    <property type="entry name" value="FSH-like_dom"/>
</dbReference>
<dbReference type="InterPro" id="IPR050593">
    <property type="entry name" value="LovG"/>
</dbReference>
<dbReference type="PANTHER" id="PTHR48070">
    <property type="entry name" value="ESTERASE OVCA2"/>
    <property type="match status" value="1"/>
</dbReference>
<dbReference type="PANTHER" id="PTHR48070:SF6">
    <property type="entry name" value="ESTERASE OVCA2"/>
    <property type="match status" value="1"/>
</dbReference>
<dbReference type="Pfam" id="PF03959">
    <property type="entry name" value="FSH1"/>
    <property type="match status" value="1"/>
</dbReference>
<dbReference type="SUPFAM" id="SSF53474">
    <property type="entry name" value="alpha/beta-Hydrolases"/>
    <property type="match status" value="1"/>
</dbReference>
<gene>
    <name type="primary">FSH3</name>
    <name type="ordered locus">YOR280C</name>
</gene>
<sequence>MSEKKKVLMLHGFVQSDKIFSAKTGGLRKNLKKLGYDLYYPCAPHSIDKKALFQSESEKGRDAAKEFNTSATSDEVYGWFFRNPESFNSFQIDQKVFNYLRNYVLENGPFDGVIGFSQGAGLGGYLVTDFNRILNLTDEQQPALKFFISFSGFKLEDQSYQKEYHRIIQVPSLHVRGELDEVVAESRIMALYESWPDNKRTLLVHPGAHFVPNSKPFVSQVCNWIQGITSKEGQEHNAQPEVDRKQFDKPQLEDDLLDMIDSLGKL</sequence>
<evidence type="ECO:0000250" key="1"/>
<evidence type="ECO:0000269" key="2">
    <source>
    </source>
</evidence>
<evidence type="ECO:0000269" key="3">
    <source>
    </source>
</evidence>
<evidence type="ECO:0000305" key="4"/>
<comment type="function">
    <text evidence="2">Serine hydrolase of unknown specificity.</text>
</comment>
<comment type="induction">
    <text evidence="3">Regulated by RFX1/CRT1.</text>
</comment>
<comment type="similarity">
    <text evidence="4">Belongs to the AB hydrolase 3 family.</text>
</comment>
<keyword id="KW-0378">Hydrolase</keyword>
<keyword id="KW-1185">Reference proteome</keyword>
<keyword id="KW-0719">Serine esterase</keyword>
<accession>Q99369</accession>
<accession>D6W2X9</accession>
<proteinExistence type="evidence at transcript level"/>
<protein>
    <recommendedName>
        <fullName>Family of serine hydrolases 3</fullName>
        <ecNumber>3.1.-.-</ecNumber>
    </recommendedName>
</protein>
<organism>
    <name type="scientific">Saccharomyces cerevisiae (strain ATCC 204508 / S288c)</name>
    <name type="common">Baker's yeast</name>
    <dbReference type="NCBI Taxonomy" id="559292"/>
    <lineage>
        <taxon>Eukaryota</taxon>
        <taxon>Fungi</taxon>
        <taxon>Dikarya</taxon>
        <taxon>Ascomycota</taxon>
        <taxon>Saccharomycotina</taxon>
        <taxon>Saccharomycetes</taxon>
        <taxon>Saccharomycetales</taxon>
        <taxon>Saccharomycetaceae</taxon>
        <taxon>Saccharomyces</taxon>
    </lineage>
</organism>
<reference key="1">
    <citation type="journal article" date="1996" name="Yeast">
        <title>DNA sequence analysis of the VPH1-SNF2 region on chromosome XV of Saccharomyces cerevisiae.</title>
        <authorList>
            <person name="Cheret G."/>
            <person name="Bernardi A."/>
            <person name="Sor F.J."/>
        </authorList>
    </citation>
    <scope>NUCLEOTIDE SEQUENCE [GENOMIC DNA]</scope>
    <source>
        <strain>ATCC 204508 / S288c</strain>
    </source>
</reference>
<reference key="2">
    <citation type="journal article" date="1997" name="Nature">
        <title>The nucleotide sequence of Saccharomyces cerevisiae chromosome XV.</title>
        <authorList>
            <person name="Dujon B."/>
            <person name="Albermann K."/>
            <person name="Aldea M."/>
            <person name="Alexandraki D."/>
            <person name="Ansorge W."/>
            <person name="Arino J."/>
            <person name="Benes V."/>
            <person name="Bohn C."/>
            <person name="Bolotin-Fukuhara M."/>
            <person name="Bordonne R."/>
            <person name="Boyer J."/>
            <person name="Camasses A."/>
            <person name="Casamayor A."/>
            <person name="Casas C."/>
            <person name="Cheret G."/>
            <person name="Cziepluch C."/>
            <person name="Daignan-Fornier B."/>
            <person name="Dang V.-D."/>
            <person name="de Haan M."/>
            <person name="Delius H."/>
            <person name="Durand P."/>
            <person name="Fairhead C."/>
            <person name="Feldmann H."/>
            <person name="Gaillon L."/>
            <person name="Galisson F."/>
            <person name="Gamo F.-J."/>
            <person name="Gancedo C."/>
            <person name="Goffeau A."/>
            <person name="Goulding S.E."/>
            <person name="Grivell L.A."/>
            <person name="Habbig B."/>
            <person name="Hand N.J."/>
            <person name="Hani J."/>
            <person name="Hattenhorst U."/>
            <person name="Hebling U."/>
            <person name="Hernando Y."/>
            <person name="Herrero E."/>
            <person name="Heumann K."/>
            <person name="Hiesel R."/>
            <person name="Hilger F."/>
            <person name="Hofmann B."/>
            <person name="Hollenberg C.P."/>
            <person name="Hughes B."/>
            <person name="Jauniaux J.-C."/>
            <person name="Kalogeropoulos A."/>
            <person name="Katsoulou C."/>
            <person name="Kordes E."/>
            <person name="Lafuente M.J."/>
            <person name="Landt O."/>
            <person name="Louis E.J."/>
            <person name="Maarse A.C."/>
            <person name="Madania A."/>
            <person name="Mannhaupt G."/>
            <person name="Marck C."/>
            <person name="Martin R.P."/>
            <person name="Mewes H.-W."/>
            <person name="Michaux G."/>
            <person name="Paces V."/>
            <person name="Parle-McDermott A.G."/>
            <person name="Pearson B.M."/>
            <person name="Perrin A."/>
            <person name="Pettersson B."/>
            <person name="Poch O."/>
            <person name="Pohl T.M."/>
            <person name="Poirey R."/>
            <person name="Portetelle D."/>
            <person name="Pujol A."/>
            <person name="Purnelle B."/>
            <person name="Ramezani Rad M."/>
            <person name="Rechmann S."/>
            <person name="Schwager C."/>
            <person name="Schweizer M."/>
            <person name="Sor F."/>
            <person name="Sterky F."/>
            <person name="Tarassov I.A."/>
            <person name="Teodoru C."/>
            <person name="Tettelin H."/>
            <person name="Thierry A."/>
            <person name="Tobiasch E."/>
            <person name="Tzermia M."/>
            <person name="Uhlen M."/>
            <person name="Unseld M."/>
            <person name="Valens M."/>
            <person name="Vandenbol M."/>
            <person name="Vetter I."/>
            <person name="Vlcek C."/>
            <person name="Voet M."/>
            <person name="Volckaert G."/>
            <person name="Voss H."/>
            <person name="Wambutt R."/>
            <person name="Wedler H."/>
            <person name="Wiemann S."/>
            <person name="Winsor B."/>
            <person name="Wolfe K.H."/>
            <person name="Zollner A."/>
            <person name="Zumstein E."/>
            <person name="Kleine K."/>
        </authorList>
    </citation>
    <scope>NUCLEOTIDE SEQUENCE [LARGE SCALE GENOMIC DNA]</scope>
    <source>
        <strain>ATCC 204508 / S288c</strain>
    </source>
</reference>
<reference key="3">
    <citation type="journal article" date="2014" name="G3 (Bethesda)">
        <title>The reference genome sequence of Saccharomyces cerevisiae: Then and now.</title>
        <authorList>
            <person name="Engel S.R."/>
            <person name="Dietrich F.S."/>
            <person name="Fisk D.G."/>
            <person name="Binkley G."/>
            <person name="Balakrishnan R."/>
            <person name="Costanzo M.C."/>
            <person name="Dwight S.S."/>
            <person name="Hitz B.C."/>
            <person name="Karra K."/>
            <person name="Nash R.S."/>
            <person name="Weng S."/>
            <person name="Wong E.D."/>
            <person name="Lloyd P."/>
            <person name="Skrzypek M.S."/>
            <person name="Miyasato S.R."/>
            <person name="Simison M."/>
            <person name="Cherry J.M."/>
        </authorList>
    </citation>
    <scope>GENOME REANNOTATION</scope>
    <source>
        <strain>ATCC 204508 / S288c</strain>
    </source>
</reference>
<reference key="4">
    <citation type="journal article" date="2004" name="Mol. Cell. Proteomics">
        <title>Synergistic computational and experimental proteomics approaches for more accurate detection of active serine hydrolases in yeast.</title>
        <authorList>
            <person name="Baxter S.M."/>
            <person name="Rosenblum J.S."/>
            <person name="Knutson S."/>
            <person name="Nelson M.R."/>
            <person name="Montimurro J.S."/>
            <person name="Di Gennaro J.A."/>
            <person name="Speir J.A."/>
            <person name="Burbaum J.J."/>
            <person name="Fetrow J.S."/>
        </authorList>
    </citation>
    <scope>FUNCTION</scope>
</reference>
<reference key="5">
    <citation type="journal article" date="2005" name="J. Biol. Chem.">
        <title>Identification of new genes regulated by the Crt1 transcription factor, an effector of the DNA damage checkpoint pathway in Saccharomyces cerevisiae.</title>
        <authorList>
            <person name="Zaim J."/>
            <person name="Speina E."/>
            <person name="Kierzek A.M."/>
        </authorList>
    </citation>
    <scope>INDUCTION</scope>
</reference>
<name>FSH3_YEAST</name>